<dbReference type="EMBL" id="AE017126">
    <property type="protein sequence ID" value="AAP99505.1"/>
    <property type="molecule type" value="Genomic_DNA"/>
</dbReference>
<dbReference type="RefSeq" id="NP_874853.1">
    <property type="nucleotide sequence ID" value="NC_005042.1"/>
</dbReference>
<dbReference type="RefSeq" id="WP_011124614.1">
    <property type="nucleotide sequence ID" value="NC_005042.1"/>
</dbReference>
<dbReference type="SMR" id="Q7VDC1"/>
<dbReference type="STRING" id="167539.Pro_0459"/>
<dbReference type="EnsemblBacteria" id="AAP99505">
    <property type="protein sequence ID" value="AAP99505"/>
    <property type="gene ID" value="Pro_0459"/>
</dbReference>
<dbReference type="KEGG" id="pma:Pro_0459"/>
<dbReference type="PATRIC" id="fig|167539.5.peg.470"/>
<dbReference type="eggNOG" id="COG3258">
    <property type="taxonomic scope" value="Bacteria"/>
</dbReference>
<dbReference type="HOGENOM" id="CLU_033498_0_0_3"/>
<dbReference type="OrthoDB" id="581091at2"/>
<dbReference type="Proteomes" id="UP000001420">
    <property type="component" value="Chromosome"/>
</dbReference>
<dbReference type="GO" id="GO:0031676">
    <property type="term" value="C:plasma membrane-derived thylakoid membrane"/>
    <property type="evidence" value="ECO:0007669"/>
    <property type="project" value="UniProtKB-SubCell"/>
</dbReference>
<dbReference type="GO" id="GO:0009055">
    <property type="term" value="F:electron transfer activity"/>
    <property type="evidence" value="ECO:0007669"/>
    <property type="project" value="UniProtKB-UniRule"/>
</dbReference>
<dbReference type="GO" id="GO:0020037">
    <property type="term" value="F:heme binding"/>
    <property type="evidence" value="ECO:0007669"/>
    <property type="project" value="InterPro"/>
</dbReference>
<dbReference type="GO" id="GO:0005506">
    <property type="term" value="F:iron ion binding"/>
    <property type="evidence" value="ECO:0007669"/>
    <property type="project" value="InterPro"/>
</dbReference>
<dbReference type="GO" id="GO:0015979">
    <property type="term" value="P:photosynthesis"/>
    <property type="evidence" value="ECO:0007669"/>
    <property type="project" value="UniProtKB-UniRule"/>
</dbReference>
<dbReference type="FunFam" id="2.60.40.830:FF:000001">
    <property type="entry name" value="Cytochrome f"/>
    <property type="match status" value="1"/>
</dbReference>
<dbReference type="Gene3D" id="2.40.50.100">
    <property type="match status" value="1"/>
</dbReference>
<dbReference type="Gene3D" id="2.60.40.830">
    <property type="entry name" value="Cytochrome f large domain"/>
    <property type="match status" value="1"/>
</dbReference>
<dbReference type="Gene3D" id="1.20.5.700">
    <property type="entry name" value="Single helix bin"/>
    <property type="match status" value="1"/>
</dbReference>
<dbReference type="HAMAP" id="MF_00610">
    <property type="entry name" value="Cytb6_f_cytF"/>
    <property type="match status" value="1"/>
</dbReference>
<dbReference type="InterPro" id="IPR024058">
    <property type="entry name" value="Cyt-f_TM"/>
</dbReference>
<dbReference type="InterPro" id="IPR002325">
    <property type="entry name" value="Cyt_f"/>
</dbReference>
<dbReference type="InterPro" id="IPR024094">
    <property type="entry name" value="Cyt_f_lg_dom"/>
</dbReference>
<dbReference type="InterPro" id="IPR036826">
    <property type="entry name" value="Cyt_f_lg_dom_sf"/>
</dbReference>
<dbReference type="InterPro" id="IPR011054">
    <property type="entry name" value="Rudment_hybrid_motif"/>
</dbReference>
<dbReference type="NCBIfam" id="NF002736">
    <property type="entry name" value="PRK02693.1"/>
    <property type="match status" value="1"/>
</dbReference>
<dbReference type="PANTHER" id="PTHR33288">
    <property type="match status" value="1"/>
</dbReference>
<dbReference type="PANTHER" id="PTHR33288:SF10">
    <property type="entry name" value="CYTOCHROME F"/>
    <property type="match status" value="1"/>
</dbReference>
<dbReference type="Pfam" id="PF01333">
    <property type="entry name" value="Apocytochr_F_C"/>
    <property type="match status" value="1"/>
</dbReference>
<dbReference type="Pfam" id="PF16639">
    <property type="entry name" value="Apocytochr_F_N"/>
    <property type="match status" value="1"/>
</dbReference>
<dbReference type="PRINTS" id="PR00610">
    <property type="entry name" value="CYTOCHROMEF"/>
</dbReference>
<dbReference type="SUPFAM" id="SSF103431">
    <property type="entry name" value="Cytochrome f subunit of the cytochrome b6f complex, transmembrane anchor"/>
    <property type="match status" value="1"/>
</dbReference>
<dbReference type="SUPFAM" id="SSF49441">
    <property type="entry name" value="Cytochrome f, large domain"/>
    <property type="match status" value="1"/>
</dbReference>
<dbReference type="SUPFAM" id="SSF51246">
    <property type="entry name" value="Rudiment single hybrid motif"/>
    <property type="match status" value="1"/>
</dbReference>
<dbReference type="PROSITE" id="PS51010">
    <property type="entry name" value="CYTF"/>
    <property type="match status" value="1"/>
</dbReference>
<protein>
    <recommendedName>
        <fullName evidence="1">Cytochrome f</fullName>
    </recommendedName>
</protein>
<keyword id="KW-0249">Electron transport</keyword>
<keyword id="KW-0349">Heme</keyword>
<keyword id="KW-0408">Iron</keyword>
<keyword id="KW-0472">Membrane</keyword>
<keyword id="KW-0479">Metal-binding</keyword>
<keyword id="KW-0602">Photosynthesis</keyword>
<keyword id="KW-1185">Reference proteome</keyword>
<keyword id="KW-0732">Signal</keyword>
<keyword id="KW-0793">Thylakoid</keyword>
<keyword id="KW-0812">Transmembrane</keyword>
<keyword id="KW-1133">Transmembrane helix</keyword>
<keyword id="KW-0813">Transport</keyword>
<evidence type="ECO:0000255" key="1">
    <source>
        <dbReference type="HAMAP-Rule" id="MF_00610"/>
    </source>
</evidence>
<proteinExistence type="inferred from homology"/>
<organism>
    <name type="scientific">Prochlorococcus marinus (strain SARG / CCMP1375 / SS120)</name>
    <dbReference type="NCBI Taxonomy" id="167539"/>
    <lineage>
        <taxon>Bacteria</taxon>
        <taxon>Bacillati</taxon>
        <taxon>Cyanobacteriota</taxon>
        <taxon>Cyanophyceae</taxon>
        <taxon>Synechococcales</taxon>
        <taxon>Prochlorococcaceae</taxon>
        <taxon>Prochlorococcus</taxon>
    </lineage>
</organism>
<feature type="signal peptide" evidence="1">
    <location>
        <begin position="1"/>
        <end position="27"/>
    </location>
</feature>
<feature type="chain" id="PRO_0000342028" description="Cytochrome f">
    <location>
        <begin position="28"/>
        <end position="310"/>
    </location>
</feature>
<feature type="transmembrane region" description="Helical" evidence="1">
    <location>
        <begin position="277"/>
        <end position="297"/>
    </location>
</feature>
<feature type="binding site" description="axial binding residue" evidence="1">
    <location>
        <position position="28"/>
    </location>
    <ligand>
        <name>heme</name>
        <dbReference type="ChEBI" id="CHEBI:30413"/>
    </ligand>
    <ligandPart>
        <name>Fe</name>
        <dbReference type="ChEBI" id="CHEBI:18248"/>
    </ligandPart>
</feature>
<feature type="binding site" description="covalent" evidence="1">
    <location>
        <position position="48"/>
    </location>
    <ligand>
        <name>heme</name>
        <dbReference type="ChEBI" id="CHEBI:30413"/>
    </ligand>
</feature>
<feature type="binding site" description="covalent" evidence="1">
    <location>
        <position position="51"/>
    </location>
    <ligand>
        <name>heme</name>
        <dbReference type="ChEBI" id="CHEBI:30413"/>
    </ligand>
</feature>
<feature type="binding site" description="axial binding residue" evidence="1">
    <location>
        <position position="52"/>
    </location>
    <ligand>
        <name>heme</name>
        <dbReference type="ChEBI" id="CHEBI:30413"/>
    </ligand>
    <ligandPart>
        <name>Fe</name>
        <dbReference type="ChEBI" id="CHEBI:18248"/>
    </ligandPart>
</feature>
<comment type="function">
    <text evidence="1">Component of the cytochrome b6-f complex, which mediates electron transfer between photosystem II (PSII) and photosystem I (PSI), cyclic electron flow around PSI, and state transitions.</text>
</comment>
<comment type="cofactor">
    <cofactor evidence="1">
        <name>heme</name>
        <dbReference type="ChEBI" id="CHEBI:30413"/>
    </cofactor>
    <text evidence="1">Binds 1 heme group covalently.</text>
</comment>
<comment type="subunit">
    <text evidence="1">The 4 large subunits of the cytochrome b6-f complex are cytochrome b6, subunit IV (17 kDa polypeptide, PetD), cytochrome f and the Rieske protein, while the 4 small subunits are PetG, PetL, PetM and PetN. The complex functions as a dimer.</text>
</comment>
<comment type="subcellular location">
    <subcellularLocation>
        <location evidence="1">Cellular thylakoid membrane</location>
        <topology evidence="1">Single-pass membrane protein</topology>
    </subcellularLocation>
</comment>
<comment type="similarity">
    <text evidence="1">Belongs to the cytochrome f family.</text>
</comment>
<gene>
    <name evidence="1" type="primary">petA</name>
    <name type="ordered locus">Pro_0459</name>
</gene>
<reference key="1">
    <citation type="journal article" date="2003" name="Proc. Natl. Acad. Sci. U.S.A.">
        <title>Genome sequence of the cyanobacterium Prochlorococcus marinus SS120, a nearly minimal oxyphototrophic genome.</title>
        <authorList>
            <person name="Dufresne A."/>
            <person name="Salanoubat M."/>
            <person name="Partensky F."/>
            <person name="Artiguenave F."/>
            <person name="Axmann I.M."/>
            <person name="Barbe V."/>
            <person name="Duprat S."/>
            <person name="Galperin M.Y."/>
            <person name="Koonin E.V."/>
            <person name="Le Gall F."/>
            <person name="Makarova K.S."/>
            <person name="Ostrowski M."/>
            <person name="Oztas S."/>
            <person name="Robert C."/>
            <person name="Rogozin I.B."/>
            <person name="Scanlan D.J."/>
            <person name="Tandeau de Marsac N."/>
            <person name="Weissenbach J."/>
            <person name="Wincker P."/>
            <person name="Wolf Y.I."/>
            <person name="Hess W.R."/>
        </authorList>
    </citation>
    <scope>NUCLEOTIDE SEQUENCE [LARGE SCALE GENOMIC DNA]</scope>
    <source>
        <strain>SARG / CCMP1375 / SS120</strain>
    </source>
</reference>
<name>CYF_PROMA</name>
<accession>Q7VDC1</accession>
<sequence length="310" mass="33285">MRRILTFFLGSIIIGLSIIISPSSSFAYPFWAQQNYENPREATGKLVCANCHLAKMTTQVEVPQSVGADSVFKAAVKIPYKPGTEEIGADGSKVPLQVGAVVMLPDGFKLAPQDRWTEDIKEETKGVYFTQYSEEKDNIILVGPLPGDQNKEIVFPILSPDPAKDKNIHFGKYSINVGGNRGRGQVYPTGEKSNNSIFTSTAAGLISTIEPNKDGGTNITIQTESGEAIIEEIPVGPSLVVKEGQTIDIGIPLTSDPNVGGFGQLDTEIVLQSPARVIGLIAFFAGVALTQILLVLKKKQVEKVQAAEGI</sequence>